<comment type="catalytic activity">
    <reaction evidence="1">
        <text>an N-acyl-L-aspartate + H2O = a carboxylate + L-aspartate</text>
        <dbReference type="Rhea" id="RHEA:10872"/>
        <dbReference type="ChEBI" id="CHEBI:15377"/>
        <dbReference type="ChEBI" id="CHEBI:29067"/>
        <dbReference type="ChEBI" id="CHEBI:29991"/>
        <dbReference type="ChEBI" id="CHEBI:58497"/>
        <dbReference type="EC" id="3.5.1.15"/>
    </reaction>
</comment>
<comment type="cofactor">
    <cofactor evidence="1">
        <name>Zn(2+)</name>
        <dbReference type="ChEBI" id="CHEBI:29105"/>
    </cofactor>
    <text evidence="1">Binds 1 zinc ion per subunit.</text>
</comment>
<comment type="similarity">
    <text evidence="1">Belongs to the AspA/AstE family. Aspartoacylase subfamily.</text>
</comment>
<keyword id="KW-0378">Hydrolase</keyword>
<keyword id="KW-0479">Metal-binding</keyword>
<keyword id="KW-0862">Zinc</keyword>
<dbReference type="EC" id="3.5.1.15" evidence="1"/>
<dbReference type="EMBL" id="CP000393">
    <property type="protein sequence ID" value="ABG53661.1"/>
    <property type="molecule type" value="Genomic_DNA"/>
</dbReference>
<dbReference type="RefSeq" id="WP_011613978.1">
    <property type="nucleotide sequence ID" value="NC_008312.1"/>
</dbReference>
<dbReference type="SMR" id="Q10VR3"/>
<dbReference type="STRING" id="203124.Tery_4698"/>
<dbReference type="KEGG" id="ter:Tery_4698"/>
<dbReference type="eggNOG" id="COG3608">
    <property type="taxonomic scope" value="Bacteria"/>
</dbReference>
<dbReference type="HOGENOM" id="CLU_083292_0_0_3"/>
<dbReference type="OrthoDB" id="531770at2"/>
<dbReference type="GO" id="GO:0005829">
    <property type="term" value="C:cytosol"/>
    <property type="evidence" value="ECO:0007669"/>
    <property type="project" value="TreeGrafter"/>
</dbReference>
<dbReference type="GO" id="GO:0019807">
    <property type="term" value="F:aspartoacylase activity"/>
    <property type="evidence" value="ECO:0007669"/>
    <property type="project" value="UniProtKB-UniRule"/>
</dbReference>
<dbReference type="GO" id="GO:0016788">
    <property type="term" value="F:hydrolase activity, acting on ester bonds"/>
    <property type="evidence" value="ECO:0007669"/>
    <property type="project" value="InterPro"/>
</dbReference>
<dbReference type="GO" id="GO:0008270">
    <property type="term" value="F:zinc ion binding"/>
    <property type="evidence" value="ECO:0007669"/>
    <property type="project" value="UniProtKB-UniRule"/>
</dbReference>
<dbReference type="CDD" id="cd06909">
    <property type="entry name" value="M14_ASPA"/>
    <property type="match status" value="1"/>
</dbReference>
<dbReference type="Gene3D" id="2.20.25.160">
    <property type="match status" value="1"/>
</dbReference>
<dbReference type="Gene3D" id="3.40.630.10">
    <property type="entry name" value="Zn peptidases"/>
    <property type="match status" value="1"/>
</dbReference>
<dbReference type="HAMAP" id="MF_00704">
    <property type="entry name" value="Aspartoacylase"/>
    <property type="match status" value="1"/>
</dbReference>
<dbReference type="InterPro" id="IPR050178">
    <property type="entry name" value="AspA/AstE_fam"/>
</dbReference>
<dbReference type="InterPro" id="IPR016708">
    <property type="entry name" value="Aspartoacylase"/>
</dbReference>
<dbReference type="InterPro" id="IPR055438">
    <property type="entry name" value="AstE_AspA_cat"/>
</dbReference>
<dbReference type="InterPro" id="IPR007036">
    <property type="entry name" value="Aste_AspA_hybrid_dom"/>
</dbReference>
<dbReference type="NCBIfam" id="NF002601">
    <property type="entry name" value="PRK02259.1"/>
    <property type="match status" value="1"/>
</dbReference>
<dbReference type="PANTHER" id="PTHR15162">
    <property type="entry name" value="ASPARTOACYLASE"/>
    <property type="match status" value="1"/>
</dbReference>
<dbReference type="PANTHER" id="PTHR15162:SF7">
    <property type="entry name" value="SUCCINYLGLUTAMATE DESUCCINYLASE"/>
    <property type="match status" value="1"/>
</dbReference>
<dbReference type="Pfam" id="PF24827">
    <property type="entry name" value="AstE_AspA_cat"/>
    <property type="match status" value="1"/>
</dbReference>
<dbReference type="Pfam" id="PF04952">
    <property type="entry name" value="AstE_AspA_hybrid"/>
    <property type="match status" value="1"/>
</dbReference>
<dbReference type="PIRSF" id="PIRSF018001">
    <property type="entry name" value="Aspartoacylase"/>
    <property type="match status" value="1"/>
</dbReference>
<dbReference type="SUPFAM" id="SSF53187">
    <property type="entry name" value="Zn-dependent exopeptidases"/>
    <property type="match status" value="1"/>
</dbReference>
<name>ASPA_TRIEI</name>
<protein>
    <recommendedName>
        <fullName evidence="1">Probable aspartoacylase</fullName>
        <ecNumber evidence="1">3.5.1.15</ecNumber>
    </recommendedName>
</protein>
<reference key="1">
    <citation type="journal article" date="2015" name="Proc. Natl. Acad. Sci. U.S.A.">
        <title>Trichodesmium genome maintains abundant, widespread noncoding DNA in situ, despite oligotrophic lifestyle.</title>
        <authorList>
            <person name="Walworth N."/>
            <person name="Pfreundt U."/>
            <person name="Nelson W.C."/>
            <person name="Mincer T."/>
            <person name="Heidelberg J.F."/>
            <person name="Fu F."/>
            <person name="Waterbury J.B."/>
            <person name="Glavina del Rio T."/>
            <person name="Goodwin L."/>
            <person name="Kyrpides N.C."/>
            <person name="Land M.L."/>
            <person name="Woyke T."/>
            <person name="Hutchins D.A."/>
            <person name="Hess W.R."/>
            <person name="Webb E.A."/>
        </authorList>
    </citation>
    <scope>NUCLEOTIDE SEQUENCE [LARGE SCALE GENOMIC DNA]</scope>
    <source>
        <strain>IMS101</strain>
    </source>
</reference>
<feature type="chain" id="PRO_1000147944" description="Probable aspartoacylase">
    <location>
        <begin position="1"/>
        <end position="293"/>
    </location>
</feature>
<feature type="binding site" evidence="1">
    <location>
        <position position="14"/>
    </location>
    <ligand>
        <name>Zn(2+)</name>
        <dbReference type="ChEBI" id="CHEBI:29105"/>
    </ligand>
</feature>
<feature type="binding site" evidence="1">
    <location>
        <position position="17"/>
    </location>
    <ligand>
        <name>Zn(2+)</name>
        <dbReference type="ChEBI" id="CHEBI:29105"/>
    </ligand>
</feature>
<feature type="binding site" evidence="1">
    <location>
        <position position="56"/>
    </location>
    <ligand>
        <name>substrate</name>
    </ligand>
</feature>
<feature type="binding site" evidence="1">
    <location>
        <begin position="63"/>
        <end position="64"/>
    </location>
    <ligand>
        <name>substrate</name>
    </ligand>
</feature>
<feature type="binding site" evidence="1">
    <location>
        <position position="106"/>
    </location>
    <ligand>
        <name>Zn(2+)</name>
        <dbReference type="ChEBI" id="CHEBI:29105"/>
    </ligand>
</feature>
<feature type="binding site" evidence="1">
    <location>
        <position position="165"/>
    </location>
    <ligand>
        <name>substrate</name>
    </ligand>
</feature>
<feature type="binding site" evidence="1">
    <location>
        <position position="276"/>
    </location>
    <ligand>
        <name>substrate</name>
    </ligand>
</feature>
<accession>Q10VR3</accession>
<sequence length="293" mass="33827">MKKINKLAIVGGTHGNEFTGIYLVKKFEEFPELISRRNFDTQTLLANPQGFELVKRYIDTDLNRCFKVEDLENNTSLNYEESRAKFINQMLGPKGNPKFDFILDLHTTTANMGLTIILVNYHPFNLKIATYLSSVEPNLKIYTCFNPEVENTFINSICERGFAIEVGPIAQGILQADLFYKTEKLVQISLDFIEHFNEGKLDHINRDIVIYKHLKVVDYPKTKDGEIVAMIHPQLQGRDYQKLSPGEPMFLTFDNQTIYYQEESPVWPVFINEAAYYEKGIAMCLTKKESIRV</sequence>
<organism>
    <name type="scientific">Trichodesmium erythraeum (strain IMS101)</name>
    <dbReference type="NCBI Taxonomy" id="203124"/>
    <lineage>
        <taxon>Bacteria</taxon>
        <taxon>Bacillati</taxon>
        <taxon>Cyanobacteriota</taxon>
        <taxon>Cyanophyceae</taxon>
        <taxon>Oscillatoriophycideae</taxon>
        <taxon>Oscillatoriales</taxon>
        <taxon>Microcoleaceae</taxon>
        <taxon>Trichodesmium</taxon>
    </lineage>
</organism>
<proteinExistence type="inferred from homology"/>
<gene>
    <name type="ordered locus">Tery_4698</name>
</gene>
<evidence type="ECO:0000255" key="1">
    <source>
        <dbReference type="HAMAP-Rule" id="MF_00704"/>
    </source>
</evidence>